<accession>P9WGD3</accession>
<accession>L0TD60</accession>
<accession>O05778</accession>
<accession>P0A612</accession>
<accession>P96294</accession>
<proteinExistence type="evidence at protein level"/>
<comment type="function">
    <text evidence="1">Required for rescue of stalled ribosomes mediated by trans-translation. Binds to transfer-messenger RNA (tmRNA), required for stable association of tmRNA with ribosomes. tmRNA and SmpB together mimic tRNA shape, replacing the anticodon stem-loop with SmpB. tmRNA is encoded by the ssrA gene; the 2 termini fold to resemble tRNA(Ala) and it encodes a 'tag peptide', a short internal open reading frame. During trans-translation Ala-aminoacylated tmRNA acts like a tRNA, entering the A-site of stalled ribosomes, displacing the stalled mRNA. The ribosome then switches to translate the ORF on the tmRNA; the nascent peptide is terminated with the 'tag peptide' encoded by the tmRNA and targeted for degradation. The ribosome is freed to recommence translation, which seems to be the essential function of trans-translation.</text>
</comment>
<comment type="subcellular location">
    <subcellularLocation>
        <location evidence="1">Cytoplasm</location>
    </subcellularLocation>
    <text evidence="1">The tmRNA-SmpB complex associates with stalled 70S ribosomes.</text>
</comment>
<comment type="disruption phenotype">
    <text evidence="2">Not essential for aerobic growth in vitro, has a 20% decrease in tmRNA levels. Increased sensitivity to antibiotics that inhibit translation (chloramphenicol and erythromycin) but not transcription (rifampicin). No change in sensitivity to pyrazinamide (PZA). Unlike smpB, the gene for tmRNA (ssr, 10Sa RNA) is essential. Strains with ssr or smpB disruptions are not more sensitive to pyrazinamide, suggesting the prodrug does not directly target either of these components of trans-translation.</text>
</comment>
<comment type="similarity">
    <text evidence="1">Belongs to the SmpB family.</text>
</comment>
<evidence type="ECO:0000255" key="1">
    <source>
        <dbReference type="HAMAP-Rule" id="MF_00023"/>
    </source>
</evidence>
<evidence type="ECO:0000269" key="2">
    <source>
    </source>
</evidence>
<evidence type="ECO:0000305" key="3"/>
<name>SSRP_MYCTU</name>
<protein>
    <recommendedName>
        <fullName evidence="1">SsrA-binding protein</fullName>
    </recommendedName>
    <alternativeName>
        <fullName evidence="1">Small protein B</fullName>
    </alternativeName>
</protein>
<dbReference type="EMBL" id="X70031">
    <property type="protein sequence ID" value="CAA49621.1"/>
    <property type="molecule type" value="Genomic_DNA"/>
</dbReference>
<dbReference type="EMBL" id="AL123456">
    <property type="protein sequence ID" value="CCP45910.1"/>
    <property type="molecule type" value="Genomic_DNA"/>
</dbReference>
<dbReference type="PIR" id="C70919">
    <property type="entry name" value="C70919"/>
</dbReference>
<dbReference type="RefSeq" id="NP_217616.1">
    <property type="nucleotide sequence ID" value="NC_000962.3"/>
</dbReference>
<dbReference type="RefSeq" id="WP_003416113.1">
    <property type="nucleotide sequence ID" value="NZ_NVQJ01000011.1"/>
</dbReference>
<dbReference type="SMR" id="P9WGD3"/>
<dbReference type="FunCoup" id="P9WGD3">
    <property type="interactions" value="64"/>
</dbReference>
<dbReference type="STRING" id="83332.Rv3100c"/>
<dbReference type="PaxDb" id="83332-Rv3100c"/>
<dbReference type="GeneID" id="45427099"/>
<dbReference type="GeneID" id="888675"/>
<dbReference type="KEGG" id="mtu:Rv3100c"/>
<dbReference type="KEGG" id="mtv:RVBD_3100c"/>
<dbReference type="TubercuList" id="Rv3100c"/>
<dbReference type="eggNOG" id="COG0691">
    <property type="taxonomic scope" value="Bacteria"/>
</dbReference>
<dbReference type="InParanoid" id="P9WGD3"/>
<dbReference type="OrthoDB" id="9805462at2"/>
<dbReference type="PhylomeDB" id="P9WGD3"/>
<dbReference type="Proteomes" id="UP000001584">
    <property type="component" value="Chromosome"/>
</dbReference>
<dbReference type="GO" id="GO:0005829">
    <property type="term" value="C:cytosol"/>
    <property type="evidence" value="ECO:0007005"/>
    <property type="project" value="MTBBASE"/>
</dbReference>
<dbReference type="GO" id="GO:0003723">
    <property type="term" value="F:RNA binding"/>
    <property type="evidence" value="ECO:0000318"/>
    <property type="project" value="GO_Central"/>
</dbReference>
<dbReference type="GO" id="GO:0070929">
    <property type="term" value="P:trans-translation"/>
    <property type="evidence" value="ECO:0007669"/>
    <property type="project" value="UniProtKB-UniRule"/>
</dbReference>
<dbReference type="CDD" id="cd09294">
    <property type="entry name" value="SmpB"/>
    <property type="match status" value="1"/>
</dbReference>
<dbReference type="Gene3D" id="2.40.280.10">
    <property type="match status" value="1"/>
</dbReference>
<dbReference type="HAMAP" id="MF_00023">
    <property type="entry name" value="SmpB"/>
    <property type="match status" value="1"/>
</dbReference>
<dbReference type="InterPro" id="IPR023620">
    <property type="entry name" value="SmpB"/>
</dbReference>
<dbReference type="InterPro" id="IPR000037">
    <property type="entry name" value="SsrA-bd_prot"/>
</dbReference>
<dbReference type="InterPro" id="IPR020081">
    <property type="entry name" value="SsrA-bd_prot_CS"/>
</dbReference>
<dbReference type="NCBIfam" id="NF003843">
    <property type="entry name" value="PRK05422.1"/>
    <property type="match status" value="1"/>
</dbReference>
<dbReference type="NCBIfam" id="TIGR00086">
    <property type="entry name" value="smpB"/>
    <property type="match status" value="1"/>
</dbReference>
<dbReference type="PANTHER" id="PTHR30308:SF2">
    <property type="entry name" value="SSRA-BINDING PROTEIN"/>
    <property type="match status" value="1"/>
</dbReference>
<dbReference type="PANTHER" id="PTHR30308">
    <property type="entry name" value="TMRNA-BINDING COMPONENT OF TRANS-TRANSLATION TAGGING COMPLEX"/>
    <property type="match status" value="1"/>
</dbReference>
<dbReference type="Pfam" id="PF01668">
    <property type="entry name" value="SmpB"/>
    <property type="match status" value="1"/>
</dbReference>
<dbReference type="SUPFAM" id="SSF74982">
    <property type="entry name" value="Small protein B (SmpB)"/>
    <property type="match status" value="1"/>
</dbReference>
<dbReference type="PROSITE" id="PS01317">
    <property type="entry name" value="SSRP"/>
    <property type="match status" value="1"/>
</dbReference>
<keyword id="KW-0963">Cytoplasm</keyword>
<keyword id="KW-1185">Reference proteome</keyword>
<keyword id="KW-0694">RNA-binding</keyword>
<gene>
    <name evidence="1" type="primary">smpB</name>
    <name type="ordered locus">Rv3100c</name>
    <name type="ORF">MTCY164.11c</name>
</gene>
<organism>
    <name type="scientific">Mycobacterium tuberculosis (strain ATCC 25618 / H37Rv)</name>
    <dbReference type="NCBI Taxonomy" id="83332"/>
    <lineage>
        <taxon>Bacteria</taxon>
        <taxon>Bacillati</taxon>
        <taxon>Actinomycetota</taxon>
        <taxon>Actinomycetes</taxon>
        <taxon>Mycobacteriales</taxon>
        <taxon>Mycobacteriaceae</taxon>
        <taxon>Mycobacterium</taxon>
        <taxon>Mycobacterium tuberculosis complex</taxon>
    </lineage>
</organism>
<feature type="chain" id="PRO_0000102991" description="SsrA-binding protein">
    <location>
        <begin position="1"/>
        <end position="160"/>
    </location>
</feature>
<feature type="sequence conflict" description="In Ref. 1; CAA49621." evidence="3" ref="1">
    <original>S</original>
    <variation>R</variation>
    <location>
        <position position="14"/>
    </location>
</feature>
<reference key="1">
    <citation type="journal article" date="1996" name="Gene">
        <title>An M. tuberculosis DNA fragment contains genes encoding cell division proteins ftsX and ftsE, a basic protein and homologues of PemK and small protein B.</title>
        <authorList>
            <person name="Tyagi J.S."/>
            <person name="Das T.K."/>
            <person name="Kinger A.K."/>
        </authorList>
    </citation>
    <scope>NUCLEOTIDE SEQUENCE [GENOMIC DNA]</scope>
    <source>
        <strain>ATCC 25618 / H37Rv</strain>
    </source>
</reference>
<reference key="2">
    <citation type="journal article" date="1998" name="Nature">
        <title>Deciphering the biology of Mycobacterium tuberculosis from the complete genome sequence.</title>
        <authorList>
            <person name="Cole S.T."/>
            <person name="Brosch R."/>
            <person name="Parkhill J."/>
            <person name="Garnier T."/>
            <person name="Churcher C.M."/>
            <person name="Harris D.E."/>
            <person name="Gordon S.V."/>
            <person name="Eiglmeier K."/>
            <person name="Gas S."/>
            <person name="Barry C.E. III"/>
            <person name="Tekaia F."/>
            <person name="Badcock K."/>
            <person name="Basham D."/>
            <person name="Brown D."/>
            <person name="Chillingworth T."/>
            <person name="Connor R."/>
            <person name="Davies R.M."/>
            <person name="Devlin K."/>
            <person name="Feltwell T."/>
            <person name="Gentles S."/>
            <person name="Hamlin N."/>
            <person name="Holroyd S."/>
            <person name="Hornsby T."/>
            <person name="Jagels K."/>
            <person name="Krogh A."/>
            <person name="McLean J."/>
            <person name="Moule S."/>
            <person name="Murphy L.D."/>
            <person name="Oliver S."/>
            <person name="Osborne J."/>
            <person name="Quail M.A."/>
            <person name="Rajandream M.A."/>
            <person name="Rogers J."/>
            <person name="Rutter S."/>
            <person name="Seeger K."/>
            <person name="Skelton S."/>
            <person name="Squares S."/>
            <person name="Squares R."/>
            <person name="Sulston J.E."/>
            <person name="Taylor K."/>
            <person name="Whitehead S."/>
            <person name="Barrell B.G."/>
        </authorList>
    </citation>
    <scope>NUCLEOTIDE SEQUENCE [LARGE SCALE GENOMIC DNA]</scope>
    <source>
        <strain>ATCC 25618 / H37Rv</strain>
    </source>
</reference>
<reference key="3">
    <citation type="journal article" date="2011" name="Mol. Cell. Proteomics">
        <title>Proteogenomic analysis of Mycobacterium tuberculosis by high resolution mass spectrometry.</title>
        <authorList>
            <person name="Kelkar D.S."/>
            <person name="Kumar D."/>
            <person name="Kumar P."/>
            <person name="Balakrishnan L."/>
            <person name="Muthusamy B."/>
            <person name="Yadav A.K."/>
            <person name="Shrivastava P."/>
            <person name="Marimuthu A."/>
            <person name="Anand S."/>
            <person name="Sundaram H."/>
            <person name="Kingsbury R."/>
            <person name="Harsha H.C."/>
            <person name="Nair B."/>
            <person name="Prasad T.S."/>
            <person name="Chauhan D.S."/>
            <person name="Katoch K."/>
            <person name="Katoch V.M."/>
            <person name="Kumar P."/>
            <person name="Chaerkady R."/>
            <person name="Ramachandran S."/>
            <person name="Dash D."/>
            <person name="Pandey A."/>
        </authorList>
    </citation>
    <scope>IDENTIFICATION BY MASS SPECTROMETRY [LARGE SCALE ANALYSIS]</scope>
    <source>
        <strain>ATCC 25618 / H37Rv</strain>
    </source>
</reference>
<reference key="4">
    <citation type="journal article" date="2014" name="Tuberculosis">
        <title>Mycobacterium tuberculosis possesses an unusual tmRNA rescue system.</title>
        <authorList>
            <person name="Personne Y."/>
            <person name="Parish T."/>
        </authorList>
    </citation>
    <scope>DISRUPTION PHENOTYPE</scope>
    <source>
        <strain>H37Rv</strain>
    </source>
</reference>
<sequence>MSKSSRGGRQIVASNRKARHNYSIIEVFEAGVALQGTEVKSLREGQASLADSFATIDDGEVWLRNAHIPEYRHGSWTNHEPRRNRKLLLHRRQIDTLVGKIREGNFALVPLSLYFAEGKVKVELALARGKQARDKRQDMARRDAQREVLRELGRRAKGMT</sequence>